<sequence>MQWEVVIGLEIHTQLSTQSKIFSGSATTFGSEPNTQASLVDLGMPGVLPVLNKEAVRMAVKFGLAVNAEIGQHNVFARKNYFYPDLPKGYQISQMELPIVGKGHLDIPLEDGTVKRIGITRAHLEEDAGKSLHEDFQGMTGIDLNRAGTPLLEIVSEPDMRNAKEAVAYVKAIHAIVRYLGICDGNMAEGSLRCDCNVSIRPKGQVEFGTRCEIKNVNSFRFIEKAINSEIQRQIDLIEDGGKVIQQTRLYDPNTNETRAMRSKEEANDYRYFPDPDLLPVIIEDSFLEETRATLPELPPQKRERFQSQFGLSTYDASVLASSREQADYFEQVVSISGDAKLAANWVMVELGSLLNKQGLEIDQSPVSAEQLGGMLKRITDNTISGKIAKMVFEAMANGEGSADEVIEKRGLKQVTDSGAIESMLDEVLAANAEQVEQYRAADEAKRGKMFGFFVGQAMKASKGKANPQQVNELLKAKLEG</sequence>
<feature type="chain" id="PRO_0000241260" description="Aspartyl/glutamyl-tRNA(Asn/Gln) amidotransferase subunit B">
    <location>
        <begin position="1"/>
        <end position="481"/>
    </location>
</feature>
<organism>
    <name type="scientific">Pseudomonas syringae pv. syringae (strain B728a)</name>
    <dbReference type="NCBI Taxonomy" id="205918"/>
    <lineage>
        <taxon>Bacteria</taxon>
        <taxon>Pseudomonadati</taxon>
        <taxon>Pseudomonadota</taxon>
        <taxon>Gammaproteobacteria</taxon>
        <taxon>Pseudomonadales</taxon>
        <taxon>Pseudomonadaceae</taxon>
        <taxon>Pseudomonas</taxon>
        <taxon>Pseudomonas syringae</taxon>
    </lineage>
</organism>
<dbReference type="EC" id="6.3.5.-" evidence="1"/>
<dbReference type="EMBL" id="CP000075">
    <property type="protein sequence ID" value="AAY39196.1"/>
    <property type="molecule type" value="Genomic_DNA"/>
</dbReference>
<dbReference type="RefSeq" id="WP_003313612.1">
    <property type="nucleotide sequence ID" value="NC_007005.1"/>
</dbReference>
<dbReference type="RefSeq" id="YP_237234.1">
    <property type="nucleotide sequence ID" value="NC_007005.1"/>
</dbReference>
<dbReference type="SMR" id="Q4ZNS6"/>
<dbReference type="STRING" id="205918.Psyr_4166"/>
<dbReference type="KEGG" id="psb:Psyr_4166"/>
<dbReference type="PATRIC" id="fig|205918.7.peg.4292"/>
<dbReference type="eggNOG" id="COG0064">
    <property type="taxonomic scope" value="Bacteria"/>
</dbReference>
<dbReference type="HOGENOM" id="CLU_019240_0_0_6"/>
<dbReference type="OrthoDB" id="9804078at2"/>
<dbReference type="Proteomes" id="UP000000426">
    <property type="component" value="Chromosome"/>
</dbReference>
<dbReference type="GO" id="GO:0050566">
    <property type="term" value="F:asparaginyl-tRNA synthase (glutamine-hydrolyzing) activity"/>
    <property type="evidence" value="ECO:0007669"/>
    <property type="project" value="RHEA"/>
</dbReference>
<dbReference type="GO" id="GO:0005524">
    <property type="term" value="F:ATP binding"/>
    <property type="evidence" value="ECO:0007669"/>
    <property type="project" value="UniProtKB-KW"/>
</dbReference>
<dbReference type="GO" id="GO:0050567">
    <property type="term" value="F:glutaminyl-tRNA synthase (glutamine-hydrolyzing) activity"/>
    <property type="evidence" value="ECO:0007669"/>
    <property type="project" value="UniProtKB-UniRule"/>
</dbReference>
<dbReference type="GO" id="GO:0070681">
    <property type="term" value="P:glutaminyl-tRNAGln biosynthesis via transamidation"/>
    <property type="evidence" value="ECO:0007669"/>
    <property type="project" value="TreeGrafter"/>
</dbReference>
<dbReference type="GO" id="GO:0006412">
    <property type="term" value="P:translation"/>
    <property type="evidence" value="ECO:0007669"/>
    <property type="project" value="UniProtKB-UniRule"/>
</dbReference>
<dbReference type="FunFam" id="1.10.10.410:FF:000001">
    <property type="entry name" value="Aspartyl/glutamyl-tRNA(Asn/Gln) amidotransferase subunit B"/>
    <property type="match status" value="1"/>
</dbReference>
<dbReference type="FunFam" id="1.10.150.380:FF:000001">
    <property type="entry name" value="Aspartyl/glutamyl-tRNA(Asn/Gln) amidotransferase subunit B"/>
    <property type="match status" value="1"/>
</dbReference>
<dbReference type="Gene3D" id="1.10.10.410">
    <property type="match status" value="1"/>
</dbReference>
<dbReference type="Gene3D" id="1.10.150.380">
    <property type="entry name" value="GatB domain, N-terminal subdomain"/>
    <property type="match status" value="1"/>
</dbReference>
<dbReference type="HAMAP" id="MF_00121">
    <property type="entry name" value="GatB"/>
    <property type="match status" value="1"/>
</dbReference>
<dbReference type="InterPro" id="IPR017959">
    <property type="entry name" value="Asn/Gln-tRNA_amidoTrfase_suB/E"/>
</dbReference>
<dbReference type="InterPro" id="IPR006075">
    <property type="entry name" value="Asn/Gln-tRNA_Trfase_suB/E_cat"/>
</dbReference>
<dbReference type="InterPro" id="IPR018027">
    <property type="entry name" value="Asn/Gln_amidotransferase"/>
</dbReference>
<dbReference type="InterPro" id="IPR003789">
    <property type="entry name" value="Asn/Gln_tRNA_amidoTrase-B-like"/>
</dbReference>
<dbReference type="InterPro" id="IPR004413">
    <property type="entry name" value="GatB"/>
</dbReference>
<dbReference type="InterPro" id="IPR042114">
    <property type="entry name" value="GatB_C_1"/>
</dbReference>
<dbReference type="InterPro" id="IPR023168">
    <property type="entry name" value="GatB_Yqey_C_2"/>
</dbReference>
<dbReference type="InterPro" id="IPR017958">
    <property type="entry name" value="Gln-tRNA_amidoTrfase_suB_CS"/>
</dbReference>
<dbReference type="InterPro" id="IPR014746">
    <property type="entry name" value="Gln_synth/guanido_kin_cat_dom"/>
</dbReference>
<dbReference type="NCBIfam" id="TIGR00133">
    <property type="entry name" value="gatB"/>
    <property type="match status" value="1"/>
</dbReference>
<dbReference type="NCBIfam" id="NF004012">
    <property type="entry name" value="PRK05477.1-2"/>
    <property type="match status" value="1"/>
</dbReference>
<dbReference type="NCBIfam" id="NF004014">
    <property type="entry name" value="PRK05477.1-4"/>
    <property type="match status" value="1"/>
</dbReference>
<dbReference type="NCBIfam" id="NF004015">
    <property type="entry name" value="PRK05477.1-5"/>
    <property type="match status" value="1"/>
</dbReference>
<dbReference type="PANTHER" id="PTHR11659">
    <property type="entry name" value="GLUTAMYL-TRNA GLN AMIDOTRANSFERASE SUBUNIT B MITOCHONDRIAL AND PROKARYOTIC PET112-RELATED"/>
    <property type="match status" value="1"/>
</dbReference>
<dbReference type="PANTHER" id="PTHR11659:SF0">
    <property type="entry name" value="GLUTAMYL-TRNA(GLN) AMIDOTRANSFERASE SUBUNIT B, MITOCHONDRIAL"/>
    <property type="match status" value="1"/>
</dbReference>
<dbReference type="Pfam" id="PF02934">
    <property type="entry name" value="GatB_N"/>
    <property type="match status" value="1"/>
</dbReference>
<dbReference type="Pfam" id="PF02637">
    <property type="entry name" value="GatB_Yqey"/>
    <property type="match status" value="1"/>
</dbReference>
<dbReference type="SMART" id="SM00845">
    <property type="entry name" value="GatB_Yqey"/>
    <property type="match status" value="1"/>
</dbReference>
<dbReference type="SUPFAM" id="SSF89095">
    <property type="entry name" value="GatB/YqeY motif"/>
    <property type="match status" value="1"/>
</dbReference>
<dbReference type="SUPFAM" id="SSF55931">
    <property type="entry name" value="Glutamine synthetase/guanido kinase"/>
    <property type="match status" value="1"/>
</dbReference>
<dbReference type="PROSITE" id="PS01234">
    <property type="entry name" value="GATB"/>
    <property type="match status" value="1"/>
</dbReference>
<accession>Q4ZNS6</accession>
<comment type="function">
    <text evidence="1">Allows the formation of correctly charged Asn-tRNA(Asn) or Gln-tRNA(Gln) through the transamidation of misacylated Asp-tRNA(Asn) or Glu-tRNA(Gln) in organisms which lack either or both of asparaginyl-tRNA or glutaminyl-tRNA synthetases. The reaction takes place in the presence of glutamine and ATP through an activated phospho-Asp-tRNA(Asn) or phospho-Glu-tRNA(Gln).</text>
</comment>
<comment type="catalytic activity">
    <reaction evidence="1">
        <text>L-glutamyl-tRNA(Gln) + L-glutamine + ATP + H2O = L-glutaminyl-tRNA(Gln) + L-glutamate + ADP + phosphate + H(+)</text>
        <dbReference type="Rhea" id="RHEA:17521"/>
        <dbReference type="Rhea" id="RHEA-COMP:9681"/>
        <dbReference type="Rhea" id="RHEA-COMP:9684"/>
        <dbReference type="ChEBI" id="CHEBI:15377"/>
        <dbReference type="ChEBI" id="CHEBI:15378"/>
        <dbReference type="ChEBI" id="CHEBI:29985"/>
        <dbReference type="ChEBI" id="CHEBI:30616"/>
        <dbReference type="ChEBI" id="CHEBI:43474"/>
        <dbReference type="ChEBI" id="CHEBI:58359"/>
        <dbReference type="ChEBI" id="CHEBI:78520"/>
        <dbReference type="ChEBI" id="CHEBI:78521"/>
        <dbReference type="ChEBI" id="CHEBI:456216"/>
    </reaction>
</comment>
<comment type="catalytic activity">
    <reaction evidence="1">
        <text>L-aspartyl-tRNA(Asn) + L-glutamine + ATP + H2O = L-asparaginyl-tRNA(Asn) + L-glutamate + ADP + phosphate + 2 H(+)</text>
        <dbReference type="Rhea" id="RHEA:14513"/>
        <dbReference type="Rhea" id="RHEA-COMP:9674"/>
        <dbReference type="Rhea" id="RHEA-COMP:9677"/>
        <dbReference type="ChEBI" id="CHEBI:15377"/>
        <dbReference type="ChEBI" id="CHEBI:15378"/>
        <dbReference type="ChEBI" id="CHEBI:29985"/>
        <dbReference type="ChEBI" id="CHEBI:30616"/>
        <dbReference type="ChEBI" id="CHEBI:43474"/>
        <dbReference type="ChEBI" id="CHEBI:58359"/>
        <dbReference type="ChEBI" id="CHEBI:78515"/>
        <dbReference type="ChEBI" id="CHEBI:78516"/>
        <dbReference type="ChEBI" id="CHEBI:456216"/>
    </reaction>
</comment>
<comment type="subunit">
    <text evidence="1">Heterotrimer of A, B and C subunits.</text>
</comment>
<comment type="similarity">
    <text evidence="1">Belongs to the GatB/GatE family. GatB subfamily.</text>
</comment>
<protein>
    <recommendedName>
        <fullName evidence="1">Aspartyl/glutamyl-tRNA(Asn/Gln) amidotransferase subunit B</fullName>
        <shortName evidence="1">Asp/Glu-ADT subunit B</shortName>
        <ecNumber evidence="1">6.3.5.-</ecNumber>
    </recommendedName>
</protein>
<keyword id="KW-0067">ATP-binding</keyword>
<keyword id="KW-0436">Ligase</keyword>
<keyword id="KW-0547">Nucleotide-binding</keyword>
<keyword id="KW-0648">Protein biosynthesis</keyword>
<gene>
    <name evidence="1" type="primary">gatB</name>
    <name type="ordered locus">Psyr_4166</name>
</gene>
<name>GATB_PSEU2</name>
<evidence type="ECO:0000255" key="1">
    <source>
        <dbReference type="HAMAP-Rule" id="MF_00121"/>
    </source>
</evidence>
<reference key="1">
    <citation type="journal article" date="2005" name="Proc. Natl. Acad. Sci. U.S.A.">
        <title>Comparison of the complete genome sequences of Pseudomonas syringae pv. syringae B728a and pv. tomato DC3000.</title>
        <authorList>
            <person name="Feil H."/>
            <person name="Feil W.S."/>
            <person name="Chain P."/>
            <person name="Larimer F."/>
            <person name="Dibartolo G."/>
            <person name="Copeland A."/>
            <person name="Lykidis A."/>
            <person name="Trong S."/>
            <person name="Nolan M."/>
            <person name="Goltsman E."/>
            <person name="Thiel J."/>
            <person name="Malfatti S."/>
            <person name="Loper J.E."/>
            <person name="Lapidus A."/>
            <person name="Detter J.C."/>
            <person name="Land M."/>
            <person name="Richardson P.M."/>
            <person name="Kyrpides N.C."/>
            <person name="Ivanova N."/>
            <person name="Lindow S.E."/>
        </authorList>
    </citation>
    <scope>NUCLEOTIDE SEQUENCE [LARGE SCALE GENOMIC DNA]</scope>
    <source>
        <strain>B728a</strain>
    </source>
</reference>
<proteinExistence type="inferred from homology"/>